<proteinExistence type="inferred from homology"/>
<protein>
    <recommendedName>
        <fullName evidence="1">Anti-adapter protein IraD</fullName>
    </recommendedName>
</protein>
<dbReference type="EMBL" id="CP000800">
    <property type="protein sequence ID" value="ABV19943.1"/>
    <property type="status" value="ALT_INIT"/>
    <property type="molecule type" value="Genomic_DNA"/>
</dbReference>
<dbReference type="RefSeq" id="WP_000986215.1">
    <property type="nucleotide sequence ID" value="NC_009801.1"/>
</dbReference>
<dbReference type="SMR" id="A7ZVM4"/>
<dbReference type="KEGG" id="ecw:EcE24377A_4926"/>
<dbReference type="HOGENOM" id="CLU_1977621_0_0_6"/>
<dbReference type="Proteomes" id="UP000001122">
    <property type="component" value="Chromosome"/>
</dbReference>
<dbReference type="GO" id="GO:0005737">
    <property type="term" value="C:cytoplasm"/>
    <property type="evidence" value="ECO:0007669"/>
    <property type="project" value="UniProtKB-SubCell"/>
</dbReference>
<dbReference type="GO" id="GO:0043856">
    <property type="term" value="F:anti-sigma factor antagonist activity"/>
    <property type="evidence" value="ECO:0007669"/>
    <property type="project" value="InterPro"/>
</dbReference>
<dbReference type="GO" id="GO:0034599">
    <property type="term" value="P:cellular response to oxidative stress"/>
    <property type="evidence" value="ECO:0007669"/>
    <property type="project" value="UniProtKB-UniRule"/>
</dbReference>
<dbReference type="GO" id="GO:0006974">
    <property type="term" value="P:DNA damage response"/>
    <property type="evidence" value="ECO:0007669"/>
    <property type="project" value="InterPro"/>
</dbReference>
<dbReference type="HAMAP" id="MF_02010">
    <property type="entry name" value="IraD"/>
    <property type="match status" value="1"/>
</dbReference>
<dbReference type="InterPro" id="IPR023776">
    <property type="entry name" value="Anti-adapt_IraD"/>
</dbReference>
<dbReference type="InterPro" id="IPR007048">
    <property type="entry name" value="IraD/Gp25-like"/>
</dbReference>
<dbReference type="NCBIfam" id="NF010726">
    <property type="entry name" value="PRK14128.1-1"/>
    <property type="match status" value="1"/>
</dbReference>
<dbReference type="NCBIfam" id="NF010728">
    <property type="entry name" value="PRK14128.1-3"/>
    <property type="match status" value="1"/>
</dbReference>
<dbReference type="Pfam" id="PF04965">
    <property type="entry name" value="GPW_gp25"/>
    <property type="match status" value="1"/>
</dbReference>
<dbReference type="SUPFAM" id="SSF160719">
    <property type="entry name" value="gpW/gp25-like"/>
    <property type="match status" value="1"/>
</dbReference>
<sequence>MMRQSLQAVLPEISGNKTSPLRKSVCSDLLTLFNSPHSALPSLLVSGMPEWQVHNPSDKHLQSWYCRQLRSALLFHEPRIAALQVNLKEAYCHTLAISLEIMLYHDDESLTFDLVWDNGGWRSATLENVS</sequence>
<gene>
    <name evidence="1" type="primary">iraD</name>
    <name type="ordered locus">EcE24377A_4926</name>
</gene>
<name>IRAD_ECO24</name>
<evidence type="ECO:0000255" key="1">
    <source>
        <dbReference type="HAMAP-Rule" id="MF_02010"/>
    </source>
</evidence>
<evidence type="ECO:0000305" key="2"/>
<comment type="function">
    <text evidence="1">Inhibits RpoS proteolysis by regulating RssB activity, thereby increasing the stability of the sigma stress factor RpoS during oxidative stress. Its effect on RpoS stability is due to its interaction with RssB, which probably blocks the interaction of RssB with RpoS, and the consequent delivery of the RssB-RpoS complex to the ClpXP protein degradation pathway.</text>
</comment>
<comment type="subunit">
    <text evidence="1">Interacts with RssB.</text>
</comment>
<comment type="subcellular location">
    <subcellularLocation>
        <location evidence="1">Cytoplasm</location>
    </subcellularLocation>
</comment>
<comment type="similarity">
    <text evidence="1">Belongs to the GpW/Gp25 family. IraD subfamily.</text>
</comment>
<comment type="sequence caution" evidence="2">
    <conflict type="erroneous initiation">
        <sequence resource="EMBL-CDS" id="ABV19943"/>
    </conflict>
</comment>
<feature type="chain" id="PRO_0000337891" description="Anti-adapter protein IraD">
    <location>
        <begin position="1"/>
        <end position="130"/>
    </location>
</feature>
<organism>
    <name type="scientific">Escherichia coli O139:H28 (strain E24377A / ETEC)</name>
    <dbReference type="NCBI Taxonomy" id="331111"/>
    <lineage>
        <taxon>Bacteria</taxon>
        <taxon>Pseudomonadati</taxon>
        <taxon>Pseudomonadota</taxon>
        <taxon>Gammaproteobacteria</taxon>
        <taxon>Enterobacterales</taxon>
        <taxon>Enterobacteriaceae</taxon>
        <taxon>Escherichia</taxon>
    </lineage>
</organism>
<accession>A7ZVM4</accession>
<keyword id="KW-0963">Cytoplasm</keyword>
<keyword id="KW-1185">Reference proteome</keyword>
<keyword id="KW-0346">Stress response</keyword>
<reference key="1">
    <citation type="journal article" date="2008" name="J. Bacteriol.">
        <title>The pangenome structure of Escherichia coli: comparative genomic analysis of E. coli commensal and pathogenic isolates.</title>
        <authorList>
            <person name="Rasko D.A."/>
            <person name="Rosovitz M.J."/>
            <person name="Myers G.S.A."/>
            <person name="Mongodin E.F."/>
            <person name="Fricke W.F."/>
            <person name="Gajer P."/>
            <person name="Crabtree J."/>
            <person name="Sebaihia M."/>
            <person name="Thomson N.R."/>
            <person name="Chaudhuri R."/>
            <person name="Henderson I.R."/>
            <person name="Sperandio V."/>
            <person name="Ravel J."/>
        </authorList>
    </citation>
    <scope>NUCLEOTIDE SEQUENCE [LARGE SCALE GENOMIC DNA]</scope>
    <source>
        <strain>E24377A / ETEC</strain>
    </source>
</reference>